<sequence length="617" mass="68728">MIYDGIIVGAGHAGVEAALAMAKMKLNTLLITGDLTKVATLPCNPSIGGPAKGIVVREIDALGGQMAKSADLSQIQMKMLNPSKGPAVRALRAQIDKLKYPKVMLDVLQNTPNLTLLQGFVDTLIVEDNTVKGVNLEDGSQVFAQTVIITTGTYLGSQILIGHEKTSSGPNGERTTRGISNQLKNLGFEMLRLKTGTPPRIARDSIDYSKTVPQPGDGVFQTFSHDSPITDLGHQEFSYLIHTSPDTKDIIFNNLDASAMYGGVVEGVGPRYCPSIEDKFVRFKDKDRHQIFIEPESMDLNEMYIQGLSTSMPKHIQEQMVRSLPGMENARIVRYAYAIEYDAINPRQLYQSLETKVIHNLFCAGQINGTSGYEEAAGQGLMAGINAGLKVQGKKPLVLKRDEAYIGVLIDDLITKGTSEPYRLLTSRAEHRLLLRNDNADIRLRDYGYQIGLVDDATYERFEHKKIALKEMIERAKSTKINPTEENLNYLASVNSSPIYEGVTVFKLLERPELKIETLKHFLPSDYNHEIYEQLEIYIKYDGYIEKARREADKLLRYESRFIPNDINYHSIHNISAEAKEKLSKIKPETLGQATRILGVGPTDVSMLLVYLEAKNA</sequence>
<keyword id="KW-0963">Cytoplasm</keyword>
<keyword id="KW-0274">FAD</keyword>
<keyword id="KW-0285">Flavoprotein</keyword>
<keyword id="KW-0520">NAD</keyword>
<keyword id="KW-1185">Reference proteome</keyword>
<keyword id="KW-0819">tRNA processing</keyword>
<proteinExistence type="inferred from homology"/>
<dbReference type="EMBL" id="CP000896">
    <property type="protein sequence ID" value="ABX80704.1"/>
    <property type="molecule type" value="Genomic_DNA"/>
</dbReference>
<dbReference type="RefSeq" id="WP_012242035.1">
    <property type="nucleotide sequence ID" value="NC_010163.1"/>
</dbReference>
<dbReference type="SMR" id="A9NEC4"/>
<dbReference type="STRING" id="441768.ACL_0063"/>
<dbReference type="GeneID" id="41338266"/>
<dbReference type="KEGG" id="acl:ACL_0063"/>
<dbReference type="eggNOG" id="COG0445">
    <property type="taxonomic scope" value="Bacteria"/>
</dbReference>
<dbReference type="HOGENOM" id="CLU_007831_2_2_14"/>
<dbReference type="OrthoDB" id="9815560at2"/>
<dbReference type="Proteomes" id="UP000008558">
    <property type="component" value="Chromosome"/>
</dbReference>
<dbReference type="GO" id="GO:0005829">
    <property type="term" value="C:cytosol"/>
    <property type="evidence" value="ECO:0007669"/>
    <property type="project" value="TreeGrafter"/>
</dbReference>
<dbReference type="GO" id="GO:0050660">
    <property type="term" value="F:flavin adenine dinucleotide binding"/>
    <property type="evidence" value="ECO:0007669"/>
    <property type="project" value="UniProtKB-UniRule"/>
</dbReference>
<dbReference type="GO" id="GO:0030488">
    <property type="term" value="P:tRNA methylation"/>
    <property type="evidence" value="ECO:0007669"/>
    <property type="project" value="TreeGrafter"/>
</dbReference>
<dbReference type="GO" id="GO:0002098">
    <property type="term" value="P:tRNA wobble uridine modification"/>
    <property type="evidence" value="ECO:0007669"/>
    <property type="project" value="InterPro"/>
</dbReference>
<dbReference type="FunFam" id="1.10.150.570:FF:000001">
    <property type="entry name" value="tRNA uridine 5-carboxymethylaminomethyl modification enzyme MnmG"/>
    <property type="match status" value="1"/>
</dbReference>
<dbReference type="FunFam" id="3.50.50.60:FF:000002">
    <property type="entry name" value="tRNA uridine 5-carboxymethylaminomethyl modification enzyme MnmG"/>
    <property type="match status" value="1"/>
</dbReference>
<dbReference type="Gene3D" id="3.50.50.60">
    <property type="entry name" value="FAD/NAD(P)-binding domain"/>
    <property type="match status" value="2"/>
</dbReference>
<dbReference type="Gene3D" id="1.10.150.570">
    <property type="entry name" value="GidA associated domain, C-terminal subdomain"/>
    <property type="match status" value="1"/>
</dbReference>
<dbReference type="Gene3D" id="1.10.10.1800">
    <property type="entry name" value="tRNA uridine 5-carboxymethylaminomethyl modification enzyme MnmG/GidA"/>
    <property type="match status" value="1"/>
</dbReference>
<dbReference type="HAMAP" id="MF_00129">
    <property type="entry name" value="MnmG_GidA"/>
    <property type="match status" value="1"/>
</dbReference>
<dbReference type="InterPro" id="IPR036188">
    <property type="entry name" value="FAD/NAD-bd_sf"/>
</dbReference>
<dbReference type="InterPro" id="IPR049312">
    <property type="entry name" value="GIDA_C_N"/>
</dbReference>
<dbReference type="InterPro" id="IPR004416">
    <property type="entry name" value="MnmG"/>
</dbReference>
<dbReference type="InterPro" id="IPR002218">
    <property type="entry name" value="MnmG-rel"/>
</dbReference>
<dbReference type="InterPro" id="IPR020595">
    <property type="entry name" value="MnmG-rel_CS"/>
</dbReference>
<dbReference type="InterPro" id="IPR026904">
    <property type="entry name" value="MnmG_C"/>
</dbReference>
<dbReference type="InterPro" id="IPR047001">
    <property type="entry name" value="MnmG_C_subdom"/>
</dbReference>
<dbReference type="InterPro" id="IPR044920">
    <property type="entry name" value="MnmG_C_subdom_sf"/>
</dbReference>
<dbReference type="InterPro" id="IPR040131">
    <property type="entry name" value="MnmG_N"/>
</dbReference>
<dbReference type="NCBIfam" id="TIGR00136">
    <property type="entry name" value="mnmG_gidA"/>
    <property type="match status" value="1"/>
</dbReference>
<dbReference type="PANTHER" id="PTHR11806">
    <property type="entry name" value="GLUCOSE INHIBITED DIVISION PROTEIN A"/>
    <property type="match status" value="1"/>
</dbReference>
<dbReference type="PANTHER" id="PTHR11806:SF0">
    <property type="entry name" value="PROTEIN MTO1 HOMOLOG, MITOCHONDRIAL"/>
    <property type="match status" value="1"/>
</dbReference>
<dbReference type="Pfam" id="PF01134">
    <property type="entry name" value="GIDA"/>
    <property type="match status" value="1"/>
</dbReference>
<dbReference type="Pfam" id="PF21680">
    <property type="entry name" value="GIDA_C_1st"/>
    <property type="match status" value="1"/>
</dbReference>
<dbReference type="Pfam" id="PF13932">
    <property type="entry name" value="SAM_GIDA_C"/>
    <property type="match status" value="1"/>
</dbReference>
<dbReference type="SMART" id="SM01228">
    <property type="entry name" value="GIDA_assoc_3"/>
    <property type="match status" value="1"/>
</dbReference>
<dbReference type="SUPFAM" id="SSF51905">
    <property type="entry name" value="FAD/NAD(P)-binding domain"/>
    <property type="match status" value="1"/>
</dbReference>
<dbReference type="PROSITE" id="PS01280">
    <property type="entry name" value="GIDA_1"/>
    <property type="match status" value="1"/>
</dbReference>
<dbReference type="PROSITE" id="PS01281">
    <property type="entry name" value="GIDA_2"/>
    <property type="match status" value="1"/>
</dbReference>
<evidence type="ECO:0000255" key="1">
    <source>
        <dbReference type="HAMAP-Rule" id="MF_00129"/>
    </source>
</evidence>
<protein>
    <recommendedName>
        <fullName evidence="1">tRNA uridine 5-carboxymethylaminomethyl modification enzyme MnmG</fullName>
    </recommendedName>
    <alternativeName>
        <fullName evidence="1">Glucose-inhibited division protein A</fullName>
    </alternativeName>
</protein>
<name>MNMG_ACHLI</name>
<accession>A9NEC4</accession>
<reference key="1">
    <citation type="journal article" date="2011" name="J. Bacteriol.">
        <title>Complete genome and proteome of Acholeplasma laidlawii.</title>
        <authorList>
            <person name="Lazarev V.N."/>
            <person name="Levitskii S.A."/>
            <person name="Basovskii Y.I."/>
            <person name="Chukin M.M."/>
            <person name="Akopian T.A."/>
            <person name="Vereshchagin V.V."/>
            <person name="Kostrjukova E.S."/>
            <person name="Kovaleva G.Y."/>
            <person name="Kazanov M.D."/>
            <person name="Malko D.B."/>
            <person name="Vitreschak A.G."/>
            <person name="Sernova N.V."/>
            <person name="Gelfand M.S."/>
            <person name="Demina I.A."/>
            <person name="Serebryakova M.V."/>
            <person name="Galyamina M.A."/>
            <person name="Vtyurin N.N."/>
            <person name="Rogov S.I."/>
            <person name="Alexeev D.G."/>
            <person name="Ladygina V.G."/>
            <person name="Govorun V.M."/>
        </authorList>
    </citation>
    <scope>NUCLEOTIDE SEQUENCE [LARGE SCALE GENOMIC DNA]</scope>
    <source>
        <strain>PG-8A</strain>
    </source>
</reference>
<feature type="chain" id="PRO_1000076306" description="tRNA uridine 5-carboxymethylaminomethyl modification enzyme MnmG">
    <location>
        <begin position="1"/>
        <end position="617"/>
    </location>
</feature>
<feature type="binding site" evidence="1">
    <location>
        <begin position="9"/>
        <end position="14"/>
    </location>
    <ligand>
        <name>FAD</name>
        <dbReference type="ChEBI" id="CHEBI:57692"/>
    </ligand>
</feature>
<feature type="binding site" evidence="1">
    <location>
        <position position="121"/>
    </location>
    <ligand>
        <name>FAD</name>
        <dbReference type="ChEBI" id="CHEBI:57692"/>
    </ligand>
</feature>
<feature type="binding site" evidence="1">
    <location>
        <position position="176"/>
    </location>
    <ligand>
        <name>FAD</name>
        <dbReference type="ChEBI" id="CHEBI:57692"/>
    </ligand>
</feature>
<feature type="binding site" evidence="1">
    <location>
        <begin position="269"/>
        <end position="283"/>
    </location>
    <ligand>
        <name>NAD(+)</name>
        <dbReference type="ChEBI" id="CHEBI:57540"/>
    </ligand>
</feature>
<feature type="binding site" evidence="1">
    <location>
        <position position="366"/>
    </location>
    <ligand>
        <name>FAD</name>
        <dbReference type="ChEBI" id="CHEBI:57692"/>
    </ligand>
</feature>
<gene>
    <name evidence="1" type="primary">mnmG</name>
    <name evidence="1" type="synonym">gidA</name>
    <name type="ordered locus">ACL_0063</name>
</gene>
<comment type="function">
    <text evidence="1">NAD-binding protein involved in the addition of a carboxymethylaminomethyl (cmnm) group at the wobble position (U34) of certain tRNAs, forming tRNA-cmnm(5)s(2)U34.</text>
</comment>
<comment type="cofactor">
    <cofactor evidence="1">
        <name>FAD</name>
        <dbReference type="ChEBI" id="CHEBI:57692"/>
    </cofactor>
</comment>
<comment type="subunit">
    <text evidence="1">Homodimer. Heterotetramer of two MnmE and two MnmG subunits.</text>
</comment>
<comment type="subcellular location">
    <subcellularLocation>
        <location evidence="1">Cytoplasm</location>
    </subcellularLocation>
</comment>
<comment type="similarity">
    <text evidence="1">Belongs to the MnmG family.</text>
</comment>
<organism>
    <name type="scientific">Acholeplasma laidlawii (strain PG-8A)</name>
    <dbReference type="NCBI Taxonomy" id="441768"/>
    <lineage>
        <taxon>Bacteria</taxon>
        <taxon>Bacillati</taxon>
        <taxon>Mycoplasmatota</taxon>
        <taxon>Mollicutes</taxon>
        <taxon>Acholeplasmatales</taxon>
        <taxon>Acholeplasmataceae</taxon>
        <taxon>Acholeplasma</taxon>
    </lineage>
</organism>